<dbReference type="EMBL" id="AP003728">
    <property type="protein sequence ID" value="BAD45527.1"/>
    <property type="molecule type" value="Genomic_DNA"/>
</dbReference>
<dbReference type="EMBL" id="AP004989">
    <property type="protein sequence ID" value="BAD45924.1"/>
    <property type="molecule type" value="Genomic_DNA"/>
</dbReference>
<dbReference type="EMBL" id="AP008212">
    <property type="protein sequence ID" value="BAF20274.1"/>
    <property type="molecule type" value="Genomic_DNA"/>
</dbReference>
<dbReference type="EMBL" id="AP014962">
    <property type="protein sequence ID" value="BAS99119.1"/>
    <property type="molecule type" value="Genomic_DNA"/>
</dbReference>
<dbReference type="EMBL" id="AK103280">
    <property type="status" value="NOT_ANNOTATED_CDS"/>
    <property type="molecule type" value="mRNA"/>
</dbReference>
<dbReference type="RefSeq" id="XP_015643843.1">
    <property type="nucleotide sequence ID" value="XM_015788357.1"/>
</dbReference>
<dbReference type="SMR" id="Q653U3"/>
<dbReference type="FunCoup" id="Q653U3">
    <property type="interactions" value="2158"/>
</dbReference>
<dbReference type="STRING" id="39947.Q653U3"/>
<dbReference type="PaxDb" id="39947-Q653U3"/>
<dbReference type="EnsemblPlants" id="Os06t0677800-01">
    <property type="protein sequence ID" value="Os06t0677800-01"/>
    <property type="gene ID" value="Os06g0677800"/>
</dbReference>
<dbReference type="Gramene" id="Os06t0677800-01">
    <property type="protein sequence ID" value="Os06t0677800-01"/>
    <property type="gene ID" value="Os06g0677800"/>
</dbReference>
<dbReference type="KEGG" id="dosa:Os06g0677800"/>
<dbReference type="eggNOG" id="ENOG502QSCZ">
    <property type="taxonomic scope" value="Eukaryota"/>
</dbReference>
<dbReference type="HOGENOM" id="CLU_002626_4_1_1"/>
<dbReference type="InParanoid" id="Q653U3"/>
<dbReference type="OMA" id="SFAETNM"/>
<dbReference type="OrthoDB" id="2016915at2759"/>
<dbReference type="PlantReactome" id="R-OSA-5608118">
    <property type="pathway name" value="Auxin signalling"/>
</dbReference>
<dbReference type="Proteomes" id="UP000000763">
    <property type="component" value="Chromosome 6"/>
</dbReference>
<dbReference type="Proteomes" id="UP000059680">
    <property type="component" value="Chromosome 6"/>
</dbReference>
<dbReference type="GO" id="GO:0005634">
    <property type="term" value="C:nucleus"/>
    <property type="evidence" value="ECO:0007669"/>
    <property type="project" value="UniProtKB-SubCell"/>
</dbReference>
<dbReference type="GO" id="GO:0003677">
    <property type="term" value="F:DNA binding"/>
    <property type="evidence" value="ECO:0007669"/>
    <property type="project" value="UniProtKB-KW"/>
</dbReference>
<dbReference type="GO" id="GO:0009734">
    <property type="term" value="P:auxin-activated signaling pathway"/>
    <property type="evidence" value="ECO:0007669"/>
    <property type="project" value="UniProtKB-KW"/>
</dbReference>
<dbReference type="GO" id="GO:0006355">
    <property type="term" value="P:regulation of DNA-templated transcription"/>
    <property type="evidence" value="ECO:0007669"/>
    <property type="project" value="InterPro"/>
</dbReference>
<dbReference type="CDD" id="cd10017">
    <property type="entry name" value="B3_DNA"/>
    <property type="match status" value="1"/>
</dbReference>
<dbReference type="FunFam" id="2.30.30.1040:FF:000001">
    <property type="entry name" value="Auxin response factor"/>
    <property type="match status" value="1"/>
</dbReference>
<dbReference type="FunFam" id="2.40.330.10:FF:000001">
    <property type="entry name" value="Auxin response factor"/>
    <property type="match status" value="1"/>
</dbReference>
<dbReference type="FunFam" id="3.10.20.90:FF:000047">
    <property type="entry name" value="Auxin response factor"/>
    <property type="match status" value="1"/>
</dbReference>
<dbReference type="Gene3D" id="2.30.30.1040">
    <property type="match status" value="1"/>
</dbReference>
<dbReference type="Gene3D" id="2.40.330.10">
    <property type="entry name" value="DNA-binding pseudobarrel domain"/>
    <property type="match status" value="1"/>
</dbReference>
<dbReference type="Gene3D" id="3.10.20.90">
    <property type="entry name" value="Phosphatidylinositol 3-kinase Catalytic Subunit, Chain A, domain 1"/>
    <property type="match status" value="1"/>
</dbReference>
<dbReference type="InterPro" id="IPR010525">
    <property type="entry name" value="ARF_dom"/>
</dbReference>
<dbReference type="InterPro" id="IPR044835">
    <property type="entry name" value="ARF_plant"/>
</dbReference>
<dbReference type="InterPro" id="IPR033389">
    <property type="entry name" value="AUX/IAA_dom"/>
</dbReference>
<dbReference type="InterPro" id="IPR003340">
    <property type="entry name" value="B3_DNA-bd"/>
</dbReference>
<dbReference type="InterPro" id="IPR015300">
    <property type="entry name" value="DNA-bd_pseudobarrel_sf"/>
</dbReference>
<dbReference type="InterPro" id="IPR053793">
    <property type="entry name" value="PB1-like"/>
</dbReference>
<dbReference type="PANTHER" id="PTHR31384:SF22">
    <property type="entry name" value="AUXIN RESPONSE FACTOR 17"/>
    <property type="match status" value="1"/>
</dbReference>
<dbReference type="PANTHER" id="PTHR31384">
    <property type="entry name" value="AUXIN RESPONSE FACTOR 4-RELATED"/>
    <property type="match status" value="1"/>
</dbReference>
<dbReference type="Pfam" id="PF06507">
    <property type="entry name" value="ARF_AD"/>
    <property type="match status" value="1"/>
</dbReference>
<dbReference type="Pfam" id="PF02309">
    <property type="entry name" value="AUX_IAA"/>
    <property type="match status" value="1"/>
</dbReference>
<dbReference type="Pfam" id="PF02362">
    <property type="entry name" value="B3"/>
    <property type="match status" value="1"/>
</dbReference>
<dbReference type="SMART" id="SM01019">
    <property type="entry name" value="B3"/>
    <property type="match status" value="1"/>
</dbReference>
<dbReference type="SUPFAM" id="SSF54277">
    <property type="entry name" value="CAD &amp; PB1 domains"/>
    <property type="match status" value="1"/>
</dbReference>
<dbReference type="SUPFAM" id="SSF101936">
    <property type="entry name" value="DNA-binding pseudobarrel domain"/>
    <property type="match status" value="1"/>
</dbReference>
<dbReference type="PROSITE" id="PS50863">
    <property type="entry name" value="B3"/>
    <property type="match status" value="1"/>
</dbReference>
<dbReference type="PROSITE" id="PS51745">
    <property type="entry name" value="PB1"/>
    <property type="match status" value="1"/>
</dbReference>
<name>ARFQ_ORYSJ</name>
<reference key="1">
    <citation type="journal article" date="2005" name="Nature">
        <title>The map-based sequence of the rice genome.</title>
        <authorList>
            <consortium name="International rice genome sequencing project (IRGSP)"/>
        </authorList>
    </citation>
    <scope>NUCLEOTIDE SEQUENCE [LARGE SCALE GENOMIC DNA]</scope>
    <source>
        <strain>cv. Nipponbare</strain>
    </source>
</reference>
<reference key="2">
    <citation type="journal article" date="2008" name="Nucleic Acids Res.">
        <title>The rice annotation project database (RAP-DB): 2008 update.</title>
        <authorList>
            <consortium name="The rice annotation project (RAP)"/>
        </authorList>
    </citation>
    <scope>GENOME REANNOTATION</scope>
    <source>
        <strain>cv. Nipponbare</strain>
    </source>
</reference>
<reference key="3">
    <citation type="journal article" date="2013" name="Rice">
        <title>Improvement of the Oryza sativa Nipponbare reference genome using next generation sequence and optical map data.</title>
        <authorList>
            <person name="Kawahara Y."/>
            <person name="de la Bastide M."/>
            <person name="Hamilton J.P."/>
            <person name="Kanamori H."/>
            <person name="McCombie W.R."/>
            <person name="Ouyang S."/>
            <person name="Schwartz D.C."/>
            <person name="Tanaka T."/>
            <person name="Wu J."/>
            <person name="Zhou S."/>
            <person name="Childs K.L."/>
            <person name="Davidson R.M."/>
            <person name="Lin H."/>
            <person name="Quesada-Ocampo L."/>
            <person name="Vaillancourt B."/>
            <person name="Sakai H."/>
            <person name="Lee S.S."/>
            <person name="Kim J."/>
            <person name="Numa H."/>
            <person name="Itoh T."/>
            <person name="Buell C.R."/>
            <person name="Matsumoto T."/>
        </authorList>
    </citation>
    <scope>GENOME REANNOTATION</scope>
    <source>
        <strain>cv. Nipponbare</strain>
    </source>
</reference>
<reference key="4">
    <citation type="journal article" date="2003" name="Science">
        <title>Collection, mapping, and annotation of over 28,000 cDNA clones from japonica rice.</title>
        <authorList>
            <consortium name="The rice full-length cDNA consortium"/>
        </authorList>
    </citation>
    <scope>NUCLEOTIDE SEQUENCE [LARGE SCALE MRNA]</scope>
    <source>
        <strain>cv. Nipponbare</strain>
    </source>
</reference>
<reference key="5">
    <citation type="journal article" date="2007" name="Gene">
        <title>Genome-wide analysis of the auxin response factors (ARF) gene family in rice (Oryza sativa).</title>
        <authorList>
            <person name="Wang D."/>
            <person name="Pei K."/>
            <person name="Fu Y."/>
            <person name="Sun Z."/>
            <person name="Li S."/>
            <person name="Liu H."/>
            <person name="Tang K."/>
            <person name="Han B."/>
            <person name="Tao Y."/>
        </authorList>
    </citation>
    <scope>GENE FAMILY</scope>
    <scope>TISSUE SPECIFICITY</scope>
    <scope>NOMENCLATURE</scope>
</reference>
<comment type="function">
    <text>Auxin response factors (ARFs) are transcriptional factors that bind specifically to the DNA sequence 5'-TGTCTC-3' found in the auxin-responsive promoter elements (AuxREs).</text>
</comment>
<comment type="subunit">
    <text evidence="1">Homodimers and heterodimers.</text>
</comment>
<comment type="subcellular location">
    <subcellularLocation>
        <location evidence="2">Nucleus</location>
    </subcellularLocation>
</comment>
<comment type="tissue specificity">
    <text evidence="5">Expressed in roots, culms, leaves and young panicles.</text>
</comment>
<comment type="domain">
    <text>Interactions between auxin response factors (ARFs) and Aux/IAA proteins occur through their C-terminal dimerization domains III and IV.</text>
</comment>
<comment type="similarity">
    <text evidence="6">Belongs to the ARF family.</text>
</comment>
<comment type="sequence caution" evidence="6">
    <conflict type="frameshift">
        <sequence resource="EMBL" id="AK103280"/>
    </conflict>
</comment>
<protein>
    <recommendedName>
        <fullName>Auxin response factor 17</fullName>
    </recommendedName>
</protein>
<gene>
    <name type="primary">ARF17</name>
    <name type="ordered locus">Os06g0677800</name>
    <name type="ordered locus">LOC_Os06g46410</name>
    <name type="ORF">B1153E06.26</name>
    <name type="ORF">P0710B08.20</name>
</gene>
<feature type="chain" id="PRO_0000299276" description="Auxin response factor 17">
    <location>
        <begin position="1"/>
        <end position="917"/>
    </location>
</feature>
<feature type="domain" description="PB1" evidence="3">
    <location>
        <begin position="786"/>
        <end position="870"/>
    </location>
</feature>
<feature type="DNA-binding region" description="TF-B3" evidence="2">
    <location>
        <begin position="134"/>
        <end position="236"/>
    </location>
</feature>
<feature type="region of interest" description="Disordered" evidence="4">
    <location>
        <begin position="571"/>
        <end position="649"/>
    </location>
</feature>
<feature type="compositionally biased region" description="Low complexity" evidence="4">
    <location>
        <begin position="576"/>
        <end position="594"/>
    </location>
</feature>
<feature type="compositionally biased region" description="Low complexity" evidence="4">
    <location>
        <begin position="604"/>
        <end position="620"/>
    </location>
</feature>
<organism>
    <name type="scientific">Oryza sativa subsp. japonica</name>
    <name type="common">Rice</name>
    <dbReference type="NCBI Taxonomy" id="39947"/>
    <lineage>
        <taxon>Eukaryota</taxon>
        <taxon>Viridiplantae</taxon>
        <taxon>Streptophyta</taxon>
        <taxon>Embryophyta</taxon>
        <taxon>Tracheophyta</taxon>
        <taxon>Spermatophyta</taxon>
        <taxon>Magnoliopsida</taxon>
        <taxon>Liliopsida</taxon>
        <taxon>Poales</taxon>
        <taxon>Poaceae</taxon>
        <taxon>BOP clade</taxon>
        <taxon>Oryzoideae</taxon>
        <taxon>Oryzeae</taxon>
        <taxon>Oryzinae</taxon>
        <taxon>Oryza</taxon>
        <taxon>Oryza sativa</taxon>
    </lineage>
</organism>
<keyword id="KW-0927">Auxin signaling pathway</keyword>
<keyword id="KW-0238">DNA-binding</keyword>
<keyword id="KW-0539">Nucleus</keyword>
<keyword id="KW-1185">Reference proteome</keyword>
<keyword id="KW-0804">Transcription</keyword>
<keyword id="KW-0805">Transcription regulation</keyword>
<accession>Q653U3</accession>
<accession>A0A0P0WZV3</accession>
<sequence>MRLSSSSGSVLPAQAASPEAVEEQKCLNSELWHACAGPLVSLPAVGSRVVYFPQGHSEQVAASTNKEMESQIPNYPNLPPQLICQLHNVTMHADAETDEVYAQMTLQPLSPQELKDPYLPAELGSANKQPTNYFCKTLTASDTSTHGGFSVPRRAAEKVFPPLDFTQQPPAQELIAKDLHGNEWKFRHIFRGQPKRHLLTTGWSVFVSAKRLVAGDSVLFIWNDNNQLLLGIRRANRPQTVMPSSVLSSDSMHIGLLAAAAHAASTNSRFTIFYNPRASPSEFVIPLSKYVKAVYHTRISVGMRFRMLFETEESSVRRYMGTITGISDLDAARWPNSHWRSVKVGWDESTAGERQPRVSLWEIEPLTTFPMYPSPFPLRLKRPWPTGLPSLHGGKDDDLTSSLMWLRDSANPGFQSLNFGGLGMNPWMQPRFDASLLGLQPDMYQTIAATAFQDPTKQVSPTILQFQQPQNIGGRANTLLPSQILQQVQPQFQQQQYLQNINETTIQGHAQSEFLQQQLQRCQSFTEQKPQLQTQQQQQESQQQQQQQSQCMQVPQHQQMQQQKNMTNYQSVPNALSPFSQLSSPSQSSPMTLQTVLPFSQPQSYPDTSMSSLSPSNTSTMHNALRPFSSEAPSHLSMPRPTAVPVPDPWSSKRVAVESLLPSRPQVTSQMEQLDSTAPSIPQSSALAPLPGRGCLVDQDGNSDPQNHLLFGVNIDSQSLLMQGGIPSLQGENDSTAIPYSTSNFLSPSQNDFPLDQTLSSADCLDESGYVPCSQNSDQVINRPPATFVKVYKSGTYGRSLDITRFSSYHELRRELGRLFGLEGQLENPLRSGWQLVFVDREDDVLLVGDDPWQEFVNSVSCIKILSPQEVQQMGKPFELLSSAPGKRLGSSCDDYVSRQESRSLSTGIASVGSVEF</sequence>
<proteinExistence type="evidence at transcript level"/>
<evidence type="ECO:0000250" key="1"/>
<evidence type="ECO:0000255" key="2">
    <source>
        <dbReference type="PROSITE-ProRule" id="PRU00326"/>
    </source>
</evidence>
<evidence type="ECO:0000255" key="3">
    <source>
        <dbReference type="PROSITE-ProRule" id="PRU01081"/>
    </source>
</evidence>
<evidence type="ECO:0000256" key="4">
    <source>
        <dbReference type="SAM" id="MobiDB-lite"/>
    </source>
</evidence>
<evidence type="ECO:0000269" key="5">
    <source>
    </source>
</evidence>
<evidence type="ECO:0000305" key="6"/>